<feature type="signal peptide" evidence="2">
    <location>
        <begin position="1"/>
        <end position="19"/>
    </location>
</feature>
<feature type="chain" id="PRO_0000202704" description="Protein VEL1">
    <location>
        <begin position="20"/>
        <end position="206"/>
    </location>
</feature>
<feature type="glycosylation site" description="N-linked (GlcNAc...) asparagine" evidence="2">
    <location>
        <position position="26"/>
    </location>
</feature>
<feature type="glycosylation site" description="N-linked (GlcNAc...) asparagine" evidence="2">
    <location>
        <position position="48"/>
    </location>
</feature>
<feature type="glycosylation site" description="N-linked (GlcNAc...) asparagine" evidence="2">
    <location>
        <position position="91"/>
    </location>
</feature>
<feature type="glycosylation site" description="N-linked (GlcNAc...) asparagine" evidence="2">
    <location>
        <position position="139"/>
    </location>
</feature>
<feature type="glycosylation site" description="N-linked (GlcNAc...) asparagine" evidence="2">
    <location>
        <position position="152"/>
    </location>
</feature>
<proteinExistence type="evidence at protein level"/>
<comment type="subcellular location">
    <subcellularLocation>
        <location evidence="1">Cytoplasm</location>
        <location evidence="1">Cytosol</location>
    </subcellularLocation>
    <text evidence="1">Intracellular soluble fraction.</text>
</comment>
<comment type="induction">
    <text evidence="3 4">In zinc-depleted conditions and has increased expression in NAP1 deletion mutants.</text>
</comment>
<comment type="PTM">
    <text evidence="5">N-glycosylated.</text>
</comment>
<comment type="similarity">
    <text evidence="6">Belongs to the VEL1 family.</text>
</comment>
<gene>
    <name type="primary">VEL1</name>
    <name type="ordered locus">YGL258W</name>
    <name type="ORF">NRA206</name>
</gene>
<organism>
    <name type="scientific">Saccharomyces cerevisiae (strain ATCC 204508 / S288c)</name>
    <name type="common">Baker's yeast</name>
    <dbReference type="NCBI Taxonomy" id="559292"/>
    <lineage>
        <taxon>Eukaryota</taxon>
        <taxon>Fungi</taxon>
        <taxon>Dikarya</taxon>
        <taxon>Ascomycota</taxon>
        <taxon>Saccharomycotina</taxon>
        <taxon>Saccharomycetes</taxon>
        <taxon>Saccharomycetales</taxon>
        <taxon>Saccharomycetaceae</taxon>
        <taxon>Saccharomyces</taxon>
    </lineage>
</organism>
<reference key="1">
    <citation type="journal article" date="1996" name="Yeast">
        <title>Sequence of a 39,411 bp DNA fragment covering the left end of chromosome VII of Saccharomyces cerevisiae.</title>
        <authorList>
            <person name="Coissac E."/>
            <person name="Maillier E."/>
            <person name="Robineau S."/>
            <person name="Netter P."/>
        </authorList>
    </citation>
    <scope>NUCLEOTIDE SEQUENCE [GENOMIC DNA]</scope>
    <source>
        <strain>ATCC 96604 / S288c / FY1679</strain>
    </source>
</reference>
<reference key="2">
    <citation type="journal article" date="1997" name="Nature">
        <title>The nucleotide sequence of Saccharomyces cerevisiae chromosome VII.</title>
        <authorList>
            <person name="Tettelin H."/>
            <person name="Agostoni-Carbone M.L."/>
            <person name="Albermann K."/>
            <person name="Albers M."/>
            <person name="Arroyo J."/>
            <person name="Backes U."/>
            <person name="Barreiros T."/>
            <person name="Bertani I."/>
            <person name="Bjourson A.J."/>
            <person name="Brueckner M."/>
            <person name="Bruschi C.V."/>
            <person name="Carignani G."/>
            <person name="Castagnoli L."/>
            <person name="Cerdan E."/>
            <person name="Clemente M.L."/>
            <person name="Coblenz A."/>
            <person name="Coglievina M."/>
            <person name="Coissac E."/>
            <person name="Defoor E."/>
            <person name="Del Bino S."/>
            <person name="Delius H."/>
            <person name="Delneri D."/>
            <person name="de Wergifosse P."/>
            <person name="Dujon B."/>
            <person name="Durand P."/>
            <person name="Entian K.-D."/>
            <person name="Eraso P."/>
            <person name="Escribano V."/>
            <person name="Fabiani L."/>
            <person name="Fartmann B."/>
            <person name="Feroli F."/>
            <person name="Feuermann M."/>
            <person name="Frontali L."/>
            <person name="Garcia-Gonzalez M."/>
            <person name="Garcia-Saez M.I."/>
            <person name="Goffeau A."/>
            <person name="Guerreiro P."/>
            <person name="Hani J."/>
            <person name="Hansen M."/>
            <person name="Hebling U."/>
            <person name="Hernandez K."/>
            <person name="Heumann K."/>
            <person name="Hilger F."/>
            <person name="Hofmann B."/>
            <person name="Indge K.J."/>
            <person name="James C.M."/>
            <person name="Klima R."/>
            <person name="Koetter P."/>
            <person name="Kramer B."/>
            <person name="Kramer W."/>
            <person name="Lauquin G."/>
            <person name="Leuther H."/>
            <person name="Louis E.J."/>
            <person name="Maillier E."/>
            <person name="Marconi A."/>
            <person name="Martegani E."/>
            <person name="Mazon M.J."/>
            <person name="Mazzoni C."/>
            <person name="McReynolds A.D.K."/>
            <person name="Melchioretto P."/>
            <person name="Mewes H.-W."/>
            <person name="Minenkova O."/>
            <person name="Mueller-Auer S."/>
            <person name="Nawrocki A."/>
            <person name="Netter P."/>
            <person name="Neu R."/>
            <person name="Nombela C."/>
            <person name="Oliver S.G."/>
            <person name="Panzeri L."/>
            <person name="Paoluzi S."/>
            <person name="Plevani P."/>
            <person name="Portetelle D."/>
            <person name="Portillo F."/>
            <person name="Potier S."/>
            <person name="Purnelle B."/>
            <person name="Rieger M."/>
            <person name="Riles L."/>
            <person name="Rinaldi T."/>
            <person name="Robben J."/>
            <person name="Rodrigues-Pousada C."/>
            <person name="Rodriguez-Belmonte E."/>
            <person name="Rodriguez-Torres A.M."/>
            <person name="Rose M."/>
            <person name="Ruzzi M."/>
            <person name="Saliola M."/>
            <person name="Sanchez-Perez M."/>
            <person name="Schaefer B."/>
            <person name="Schaefer M."/>
            <person name="Scharfe M."/>
            <person name="Schmidheini T."/>
            <person name="Schreer A."/>
            <person name="Skala J."/>
            <person name="Souciet J.-L."/>
            <person name="Steensma H.Y."/>
            <person name="Talla E."/>
            <person name="Thierry A."/>
            <person name="Vandenbol M."/>
            <person name="van der Aart Q.J.M."/>
            <person name="Van Dyck L."/>
            <person name="Vanoni M."/>
            <person name="Verhasselt P."/>
            <person name="Voet M."/>
            <person name="Volckaert G."/>
            <person name="Wambutt R."/>
            <person name="Watson M.D."/>
            <person name="Weber N."/>
            <person name="Wedler E."/>
            <person name="Wedler H."/>
            <person name="Wipfli P."/>
            <person name="Wolf K."/>
            <person name="Wright L.F."/>
            <person name="Zaccaria P."/>
            <person name="Zimmermann M."/>
            <person name="Zollner A."/>
            <person name="Kleine K."/>
        </authorList>
    </citation>
    <scope>NUCLEOTIDE SEQUENCE [LARGE SCALE GENOMIC DNA]</scope>
    <source>
        <strain>ATCC 204508 / S288c</strain>
    </source>
</reference>
<reference key="3">
    <citation type="journal article" date="2014" name="G3 (Bethesda)">
        <title>The reference genome sequence of Saccharomyces cerevisiae: Then and now.</title>
        <authorList>
            <person name="Engel S.R."/>
            <person name="Dietrich F.S."/>
            <person name="Fisk D.G."/>
            <person name="Binkley G."/>
            <person name="Balakrishnan R."/>
            <person name="Costanzo M.C."/>
            <person name="Dwight S.S."/>
            <person name="Hitz B.C."/>
            <person name="Karra K."/>
            <person name="Nash R.S."/>
            <person name="Weng S."/>
            <person name="Wong E.D."/>
            <person name="Lloyd P."/>
            <person name="Skrzypek M.S."/>
            <person name="Miyasato S.R."/>
            <person name="Simison M."/>
            <person name="Cherry J.M."/>
        </authorList>
    </citation>
    <scope>GENOME REANNOTATION</scope>
    <source>
        <strain>ATCC 204508 / S288c</strain>
    </source>
</reference>
<reference key="4">
    <citation type="journal article" date="2003" name="Biochem. Biophys. Res. Commun.">
        <title>Genome-wide expression analysis of NAP1 in Saccharomyces cerevisiae.</title>
        <authorList>
            <person name="Ohkuni K."/>
            <person name="Shirahige K."/>
            <person name="Kikuchi A."/>
        </authorList>
    </citation>
    <scope>INDUCTION</scope>
</reference>
<reference key="5">
    <citation type="journal article" date="2002" name="Curr. Genet.">
        <title>Sequence-based approach for identification of cell wall proteins in Saccharomyces cerevisiae.</title>
        <authorList>
            <person name="Terashima H."/>
            <person name="Fukuchi S."/>
            <person name="Nakai K."/>
            <person name="Arisawa M."/>
            <person name="Hamada K."/>
            <person name="Yabuki N."/>
            <person name="Kitada K."/>
        </authorList>
    </citation>
    <scope>SUBCELLULAR LOCATION</scope>
</reference>
<reference key="6">
    <citation type="journal article" date="2003" name="Appl. Environ. Microbiol.">
        <title>Application of genome-wide expression analysis to identify molecular markers useful in monitoring industrial fermentations.</title>
        <authorList>
            <person name="Higgins V.J."/>
            <person name="Rogers P.J."/>
            <person name="Dawes I.W."/>
        </authorList>
    </citation>
    <scope>INDUCTION BY ZINC DEPLETION</scope>
</reference>
<reference key="7">
    <citation type="journal article" date="2009" name="Mol. Syst. Biol.">
        <title>Global analysis of the glycoproteome in Saccharomyces cerevisiae reveals new roles for protein glycosylation in eukaryotes.</title>
        <authorList>
            <person name="Kung L.A."/>
            <person name="Tao S.-C."/>
            <person name="Qian J."/>
            <person name="Smith M.G."/>
            <person name="Snyder M."/>
            <person name="Zhu H."/>
        </authorList>
    </citation>
    <scope>GLYCOSYLATION [LARGE SCALE ANALYSIS]</scope>
</reference>
<sequence>MSFLSIFTFFSVLISVATTVRFDLTNVTCKGLHGPHCGTYVMEVVGQNGTFLGQSTFVGADVLTESAGDAWARYLGQETRFLPKLTTIASNETKNFSPLIFTTNINTCNPQSIGDAMVPFANTVTGEIEYNSWADTADNASFITGLANQLFNSTDYGVQVASCYPNFASVILSTPAVNIFGKDDTLPDYCTAIQLKAVCPPEAGFD</sequence>
<accession>P53058</accession>
<accession>D6VV77</accession>
<protein>
    <recommendedName>
        <fullName>Protein VEL1</fullName>
    </recommendedName>
    <alternativeName>
        <fullName>Velum formation protein 1</fullName>
    </alternativeName>
</protein>
<dbReference type="EMBL" id="X94357">
    <property type="protein sequence ID" value="CAA64129.1"/>
    <property type="molecule type" value="Genomic_DNA"/>
</dbReference>
<dbReference type="EMBL" id="Z72780">
    <property type="protein sequence ID" value="CAA96978.1"/>
    <property type="molecule type" value="Genomic_DNA"/>
</dbReference>
<dbReference type="EMBL" id="BK006941">
    <property type="protein sequence ID" value="DAA07861.1"/>
    <property type="molecule type" value="Genomic_DNA"/>
</dbReference>
<dbReference type="PIR" id="S61603">
    <property type="entry name" value="S61603"/>
</dbReference>
<dbReference type="RefSeq" id="NP_011256.1">
    <property type="nucleotide sequence ID" value="NM_001181124.1"/>
</dbReference>
<dbReference type="BioGRID" id="33021">
    <property type="interactions" value="36"/>
</dbReference>
<dbReference type="DIP" id="DIP-4876N"/>
<dbReference type="FunCoup" id="P53058">
    <property type="interactions" value="34"/>
</dbReference>
<dbReference type="IntAct" id="P53058">
    <property type="interactions" value="1"/>
</dbReference>
<dbReference type="STRING" id="4932.YGL258W"/>
<dbReference type="GlyCosmos" id="P53058">
    <property type="glycosylation" value="5 sites, No reported glycans"/>
</dbReference>
<dbReference type="GlyGen" id="P53058">
    <property type="glycosylation" value="5 sites"/>
</dbReference>
<dbReference type="PaxDb" id="4932-YGL258W"/>
<dbReference type="PeptideAtlas" id="P53058"/>
<dbReference type="EnsemblFungi" id="YGL258W_mRNA">
    <property type="protein sequence ID" value="YGL258W"/>
    <property type="gene ID" value="YGL258W"/>
</dbReference>
<dbReference type="GeneID" id="852634"/>
<dbReference type="KEGG" id="sce:YGL258W"/>
<dbReference type="AGR" id="SGD:S000003227"/>
<dbReference type="SGD" id="S000003227">
    <property type="gene designation" value="VEL1"/>
</dbReference>
<dbReference type="VEuPathDB" id="FungiDB:YGL258W"/>
<dbReference type="eggNOG" id="ENOG502RZUS">
    <property type="taxonomic scope" value="Eukaryota"/>
</dbReference>
<dbReference type="GeneTree" id="ENSGT00940000176668"/>
<dbReference type="HOGENOM" id="CLU_1349595_0_0_1"/>
<dbReference type="InParanoid" id="P53058"/>
<dbReference type="OMA" id="GLHGPHC"/>
<dbReference type="OrthoDB" id="4039163at2759"/>
<dbReference type="BioCyc" id="YEAST:G3O-30726-MONOMER"/>
<dbReference type="BioGRID-ORCS" id="852634">
    <property type="hits" value="0 hits in 10 CRISPR screens"/>
</dbReference>
<dbReference type="PRO" id="PR:P53058"/>
<dbReference type="Proteomes" id="UP000002311">
    <property type="component" value="Chromosome VII"/>
</dbReference>
<dbReference type="RNAct" id="P53058">
    <property type="molecule type" value="protein"/>
</dbReference>
<dbReference type="GO" id="GO:0071944">
    <property type="term" value="C:cell periphery"/>
    <property type="evidence" value="ECO:0007005"/>
    <property type="project" value="SGD"/>
</dbReference>
<dbReference type="GO" id="GO:0005829">
    <property type="term" value="C:cytosol"/>
    <property type="evidence" value="ECO:0000314"/>
    <property type="project" value="SGD"/>
</dbReference>
<dbReference type="GO" id="GO:0005783">
    <property type="term" value="C:endoplasmic reticulum"/>
    <property type="evidence" value="ECO:0007005"/>
    <property type="project" value="SGD"/>
</dbReference>
<dbReference type="InterPro" id="IPR019435">
    <property type="entry name" value="Vel1-like"/>
</dbReference>
<dbReference type="Pfam" id="PF10339">
    <property type="entry name" value="Vel1p"/>
    <property type="match status" value="1"/>
</dbReference>
<name>VEL1_YEAST</name>
<evidence type="ECO:0000250" key="1"/>
<evidence type="ECO:0000255" key="2"/>
<evidence type="ECO:0000269" key="3">
    <source>
    </source>
</evidence>
<evidence type="ECO:0000269" key="4">
    <source>
    </source>
</evidence>
<evidence type="ECO:0000269" key="5">
    <source>
    </source>
</evidence>
<evidence type="ECO:0000305" key="6"/>
<keyword id="KW-0963">Cytoplasm</keyword>
<keyword id="KW-0325">Glycoprotein</keyword>
<keyword id="KW-1185">Reference proteome</keyword>
<keyword id="KW-0732">Signal</keyword>
<keyword id="KW-0862">Zinc</keyword>